<feature type="initiator methionine" description="Removed" evidence="5">
    <location>
        <position position="1"/>
    </location>
</feature>
<feature type="chain" id="PRO_0000045199" description="Acyl-CoA-binding protein">
    <location>
        <begin position="2"/>
        <end position="87"/>
    </location>
</feature>
<feature type="peptide" id="PRO_0000000287" description="DBI(32-86)">
    <location>
        <begin position="33"/>
        <end position="87"/>
    </location>
</feature>
<feature type="domain" description="ACB" evidence="4">
    <location>
        <begin position="2"/>
        <end position="87"/>
    </location>
</feature>
<feature type="binding site" evidence="1">
    <location>
        <position position="14"/>
    </location>
    <ligand>
        <name>an acyl-CoA</name>
        <dbReference type="ChEBI" id="CHEBI:58342"/>
    </ligand>
</feature>
<feature type="binding site" evidence="1">
    <location>
        <begin position="29"/>
        <end position="33"/>
    </location>
    <ligand>
        <name>an acyl-CoA</name>
        <dbReference type="ChEBI" id="CHEBI:58342"/>
    </ligand>
</feature>
<feature type="binding site" evidence="1">
    <location>
        <position position="51"/>
    </location>
    <ligand>
        <name>an acyl-CoA</name>
        <dbReference type="ChEBI" id="CHEBI:58342"/>
    </ligand>
</feature>
<feature type="binding site" evidence="1">
    <location>
        <position position="55"/>
    </location>
    <ligand>
        <name>an acyl-CoA</name>
        <dbReference type="ChEBI" id="CHEBI:58342"/>
    </ligand>
</feature>
<feature type="binding site" evidence="1">
    <location>
        <position position="74"/>
    </location>
    <ligand>
        <name>an acyl-CoA</name>
        <dbReference type="ChEBI" id="CHEBI:58342"/>
    </ligand>
</feature>
<feature type="modified residue" description="N-acetylserine" evidence="5">
    <location>
        <position position="2"/>
    </location>
</feature>
<feature type="modified residue" description="N6-acetyllysine; alternate" evidence="2">
    <location>
        <position position="8"/>
    </location>
</feature>
<feature type="modified residue" description="N6-succinyllysine; alternate" evidence="3">
    <location>
        <position position="8"/>
    </location>
</feature>
<feature type="modified residue" description="N6-succinyllysine" evidence="3">
    <location>
        <position position="17"/>
    </location>
</feature>
<feature type="modified residue" description="N6-acetyllysine" evidence="2">
    <location>
        <position position="19"/>
    </location>
</feature>
<feature type="modified residue" description="Phosphotyrosine" evidence="2">
    <location>
        <position position="29"/>
    </location>
</feature>
<feature type="modified residue" description="N6-acetyllysine" evidence="3">
    <location>
        <position position="51"/>
    </location>
</feature>
<feature type="modified residue" description="N6-(2-hydroxyisobutyryl)lysine; alternate" evidence="2">
    <location>
        <position position="55"/>
    </location>
</feature>
<feature type="modified residue" description="N6-acetyllysine; alternate" evidence="2">
    <location>
        <position position="55"/>
    </location>
</feature>
<feature type="modified residue" description="N6-malonyllysine; alternate" evidence="1">
    <location>
        <position position="55"/>
    </location>
</feature>
<feature type="modified residue" description="N6-succinyllysine; alternate" evidence="3">
    <location>
        <position position="55"/>
    </location>
</feature>
<feature type="modified residue" description="N6-acetyllysine; alternate" evidence="2">
    <location>
        <position position="77"/>
    </location>
</feature>
<feature type="modified residue" description="N6-succinyllysine; alternate" evidence="3">
    <location>
        <position position="77"/>
    </location>
</feature>
<reference key="1">
    <citation type="submission" date="1998-11" db="EMBL/GenBank/DDBJ databases">
        <title>Cloning of pig endozepine gene.</title>
        <authorList>
            <person name="Ramli N."/>
            <person name="Suzuki H."/>
            <person name="Karnuah A.B."/>
            <person name="Hamasima N."/>
        </authorList>
    </citation>
    <scope>NUCLEOTIDE SEQUENCE [MRNA]</scope>
    <source>
        <tissue>Adipose tissue</tissue>
    </source>
</reference>
<reference key="2">
    <citation type="submission" date="2006-08" db="EMBL/GenBank/DDBJ databases">
        <title>Pig cSNP discovery using full-length enriched cDNA libraries from the database and Korean native pigs.</title>
        <authorList>
            <person name="Dirisala V.R."/>
            <person name="Kim J."/>
            <person name="Park K."/>
            <person name="Kang I."/>
            <person name="Choi H."/>
            <person name="Park C."/>
        </authorList>
    </citation>
    <scope>NUCLEOTIDE SEQUENCE [MRNA]</scope>
    <source>
        <tissue>Spleen</tissue>
    </source>
</reference>
<reference key="3">
    <citation type="journal article" date="1988" name="Eur. J. Biochem.">
        <title>Isolation and characterization of porcine diazepam-binding inhibitor, a polypeptide not only of cerebral occurrence but also common in intestinal tissues and with effects on regulation of insulin release.</title>
        <authorList>
            <person name="Chen Z.W."/>
            <person name="Agerberth B."/>
            <person name="Gell K."/>
            <person name="Andersson M."/>
            <person name="Mutt V."/>
            <person name="Oestenson C.G."/>
            <person name="Efendic S."/>
            <person name="Barros-Soederling J."/>
            <person name="Persson B."/>
            <person name="Joernvall H."/>
        </authorList>
    </citation>
    <scope>PROTEIN SEQUENCE OF 2-87</scope>
    <scope>ACETYLATION AT SER-2</scope>
    <source>
        <tissue>Intestine</tissue>
    </source>
</reference>
<reference key="4">
    <citation type="journal article" date="1993" name="Eur. J. Biochem.">
        <title>Isolation of three antibacterial peptides from pig intestine: gastric inhibitory polypeptide (7-42), diazepam-binding inhibitor (32-86) and a novel factor, peptide 3910.</title>
        <authorList>
            <person name="Agerberth B."/>
            <person name="Boman A."/>
            <person name="Andersson M."/>
            <person name="Joernvall H."/>
            <person name="Mutt V."/>
            <person name="Boman H.G."/>
        </authorList>
    </citation>
    <scope>PROTEIN SEQUENCE OF 33-87</scope>
    <source>
        <tissue>Intestine</tissue>
    </source>
</reference>
<comment type="function">
    <text>Binds medium- and long-chain acyl-CoA esters with very high affinity and may function as an intracellular carrier of acyl-CoA esters. It is also able to displace diazepam from the benzodiazepine (BZD) recognition site located on the GABA type A receptor. It is therefore possible that this protein also acts as a neuropeptide to modulate the action of the GABA receptor.</text>
</comment>
<comment type="function">
    <text>DBI(32-86) has antibacterial properties.</text>
</comment>
<comment type="subunit">
    <text>Monomer.</text>
</comment>
<comment type="subcellular location">
    <subcellularLocation>
        <location evidence="2">Endoplasmic reticulum</location>
    </subcellularLocation>
    <subcellularLocation>
        <location evidence="2">Golgi apparatus</location>
    </subcellularLocation>
    <text evidence="2">Golgi localization is dependent on ligand binding.</text>
</comment>
<comment type="similarity">
    <text evidence="6">Belongs to the ACBP family.</text>
</comment>
<name>ACBP_PIG</name>
<gene>
    <name type="primary">DBI</name>
</gene>
<keyword id="KW-0007">Acetylation</keyword>
<keyword id="KW-0044">Antibiotic</keyword>
<keyword id="KW-0929">Antimicrobial</keyword>
<keyword id="KW-0903">Direct protein sequencing</keyword>
<keyword id="KW-0256">Endoplasmic reticulum</keyword>
<keyword id="KW-0333">Golgi apparatus</keyword>
<keyword id="KW-0379">Hydroxylation</keyword>
<keyword id="KW-0446">Lipid-binding</keyword>
<keyword id="KW-0597">Phosphoprotein</keyword>
<keyword id="KW-1185">Reference proteome</keyword>
<keyword id="KW-0813">Transport</keyword>
<accession>P12026</accession>
<accession>A7YB23</accession>
<accession>Q9TSG2</accession>
<sequence>MSQAEFEKAAEEVKNLKTKPADDEMLFIYSHYKQATVGDINTERPGILDLKGKAKWDAWNGLKGTSKEDAMKAYINKVEELKKKYGI</sequence>
<dbReference type="EMBL" id="AB019792">
    <property type="protein sequence ID" value="BAA34531.1"/>
    <property type="molecule type" value="mRNA"/>
</dbReference>
<dbReference type="EMBL" id="DQ885192">
    <property type="protein sequence ID" value="ABM30147.1"/>
    <property type="molecule type" value="mRNA"/>
</dbReference>
<dbReference type="PIR" id="S00805">
    <property type="entry name" value="NZPG"/>
</dbReference>
<dbReference type="RefSeq" id="NP_999284.1">
    <property type="nucleotide sequence ID" value="NM_214119.1"/>
</dbReference>
<dbReference type="SMR" id="P12026"/>
<dbReference type="FunCoup" id="P12026">
    <property type="interactions" value="1362"/>
</dbReference>
<dbReference type="STRING" id="9823.ENSSSCP00000049861"/>
<dbReference type="iPTMnet" id="P12026"/>
<dbReference type="PaxDb" id="9823-ENSSSCP00000021888"/>
<dbReference type="PeptideAtlas" id="P12026"/>
<dbReference type="Ensembl" id="ENSSSCT00000100960.1">
    <property type="protein sequence ID" value="ENSSSCP00000075655.1"/>
    <property type="gene ID" value="ENSSSCG00000032213.3"/>
</dbReference>
<dbReference type="Ensembl" id="ENSSSCT00070004160.1">
    <property type="protein sequence ID" value="ENSSSCP00070003430.1"/>
    <property type="gene ID" value="ENSSSCG00070002226.1"/>
</dbReference>
<dbReference type="Ensembl" id="ENSSSCT00090010037">
    <property type="protein sequence ID" value="ENSSSCP00090006128"/>
    <property type="gene ID" value="ENSSSCG00090005726"/>
</dbReference>
<dbReference type="Ensembl" id="ENSSSCT00105026119">
    <property type="protein sequence ID" value="ENSSSCP00105018534"/>
    <property type="gene ID" value="ENSSSCG00105013369"/>
</dbReference>
<dbReference type="Ensembl" id="ENSSSCT00110032134">
    <property type="protein sequence ID" value="ENSSSCP00110021758"/>
    <property type="gene ID" value="ENSSSCG00110016846"/>
</dbReference>
<dbReference type="Ensembl" id="ENSSSCT00115010837">
    <property type="protein sequence ID" value="ENSSSCP00115010211"/>
    <property type="gene ID" value="ENSSSCG00115006214"/>
</dbReference>
<dbReference type="Ensembl" id="ENSSSCT00130051173">
    <property type="protein sequence ID" value="ENSSSCP00130036412"/>
    <property type="gene ID" value="ENSSSCG00130026298"/>
</dbReference>
<dbReference type="GeneID" id="397212"/>
<dbReference type="KEGG" id="ssc:397212"/>
<dbReference type="CTD" id="1622"/>
<dbReference type="eggNOG" id="KOG0817">
    <property type="taxonomic scope" value="Eukaryota"/>
</dbReference>
<dbReference type="GeneTree" id="ENSGT00940000154846"/>
<dbReference type="HOGENOM" id="CLU_118853_4_1_1"/>
<dbReference type="InParanoid" id="P12026"/>
<dbReference type="OMA" id="RYKFEAW"/>
<dbReference type="OrthoDB" id="346910at2759"/>
<dbReference type="TreeFam" id="TF335802"/>
<dbReference type="Reactome" id="R-SSC-77289">
    <property type="pathway name" value="Mitochondrial Fatty Acid Beta-Oxidation"/>
</dbReference>
<dbReference type="Proteomes" id="UP000008227">
    <property type="component" value="Chromosome 15"/>
</dbReference>
<dbReference type="Proteomes" id="UP000314985">
    <property type="component" value="Chromosome 15"/>
</dbReference>
<dbReference type="Proteomes" id="UP000694570">
    <property type="component" value="Unplaced"/>
</dbReference>
<dbReference type="Proteomes" id="UP000694571">
    <property type="component" value="Unplaced"/>
</dbReference>
<dbReference type="Proteomes" id="UP000694720">
    <property type="component" value="Unplaced"/>
</dbReference>
<dbReference type="Proteomes" id="UP000694722">
    <property type="component" value="Unplaced"/>
</dbReference>
<dbReference type="Proteomes" id="UP000694723">
    <property type="component" value="Unplaced"/>
</dbReference>
<dbReference type="Proteomes" id="UP000694724">
    <property type="component" value="Unplaced"/>
</dbReference>
<dbReference type="Proteomes" id="UP000694725">
    <property type="component" value="Unplaced"/>
</dbReference>
<dbReference type="Proteomes" id="UP000694726">
    <property type="component" value="Unplaced"/>
</dbReference>
<dbReference type="Proteomes" id="UP000694727">
    <property type="component" value="Unplaced"/>
</dbReference>
<dbReference type="Proteomes" id="UP000694728">
    <property type="component" value="Unplaced"/>
</dbReference>
<dbReference type="GO" id="GO:0005783">
    <property type="term" value="C:endoplasmic reticulum"/>
    <property type="evidence" value="ECO:0007669"/>
    <property type="project" value="UniProtKB-SubCell"/>
</dbReference>
<dbReference type="GO" id="GO:0005794">
    <property type="term" value="C:Golgi apparatus"/>
    <property type="evidence" value="ECO:0007669"/>
    <property type="project" value="UniProtKB-SubCell"/>
</dbReference>
<dbReference type="GO" id="GO:0000062">
    <property type="term" value="F:fatty-acyl-CoA binding"/>
    <property type="evidence" value="ECO:0007669"/>
    <property type="project" value="InterPro"/>
</dbReference>
<dbReference type="GO" id="GO:0042742">
    <property type="term" value="P:defense response to bacterium"/>
    <property type="evidence" value="ECO:0007669"/>
    <property type="project" value="UniProtKB-KW"/>
</dbReference>
<dbReference type="CDD" id="cd00435">
    <property type="entry name" value="ACBP"/>
    <property type="match status" value="1"/>
</dbReference>
<dbReference type="FunFam" id="1.20.80.10:FF:000010">
    <property type="entry name" value="Acyl-CoA-binding domain-containing protein 5"/>
    <property type="match status" value="1"/>
</dbReference>
<dbReference type="Gene3D" id="1.20.80.10">
    <property type="match status" value="1"/>
</dbReference>
<dbReference type="InterPro" id="IPR022408">
    <property type="entry name" value="Acyl-CoA-binding_prot_CS"/>
</dbReference>
<dbReference type="InterPro" id="IPR000582">
    <property type="entry name" value="Acyl-CoA-binding_protein"/>
</dbReference>
<dbReference type="InterPro" id="IPR035984">
    <property type="entry name" value="Acyl-CoA-binding_sf"/>
</dbReference>
<dbReference type="InterPro" id="IPR014352">
    <property type="entry name" value="FERM/acyl-CoA-bd_prot_sf"/>
</dbReference>
<dbReference type="PANTHER" id="PTHR23310:SF54">
    <property type="entry name" value="ACYL-COA-BINDING PROTEIN"/>
    <property type="match status" value="1"/>
</dbReference>
<dbReference type="PANTHER" id="PTHR23310">
    <property type="entry name" value="ACYL-COA-BINDING PROTEIN, ACBP"/>
    <property type="match status" value="1"/>
</dbReference>
<dbReference type="Pfam" id="PF00887">
    <property type="entry name" value="ACBP"/>
    <property type="match status" value="1"/>
</dbReference>
<dbReference type="PRINTS" id="PR00689">
    <property type="entry name" value="ACOABINDINGP"/>
</dbReference>
<dbReference type="SUPFAM" id="SSF47027">
    <property type="entry name" value="Acyl-CoA binding protein"/>
    <property type="match status" value="1"/>
</dbReference>
<dbReference type="PROSITE" id="PS00880">
    <property type="entry name" value="ACB_1"/>
    <property type="match status" value="1"/>
</dbReference>
<dbReference type="PROSITE" id="PS51228">
    <property type="entry name" value="ACB_2"/>
    <property type="match status" value="1"/>
</dbReference>
<protein>
    <recommendedName>
        <fullName>Acyl-CoA-binding protein</fullName>
        <shortName>ACBP</shortName>
    </recommendedName>
    <alternativeName>
        <fullName>Diazepam-binding inhibitor</fullName>
        <shortName>DBI</shortName>
    </alternativeName>
    <alternativeName>
        <fullName>Endozepine</fullName>
        <shortName>EP</shortName>
    </alternativeName>
    <component>
        <recommendedName>
            <fullName>DBI(32-86)</fullName>
        </recommendedName>
    </component>
</protein>
<organism>
    <name type="scientific">Sus scrofa</name>
    <name type="common">Pig</name>
    <dbReference type="NCBI Taxonomy" id="9823"/>
    <lineage>
        <taxon>Eukaryota</taxon>
        <taxon>Metazoa</taxon>
        <taxon>Chordata</taxon>
        <taxon>Craniata</taxon>
        <taxon>Vertebrata</taxon>
        <taxon>Euteleostomi</taxon>
        <taxon>Mammalia</taxon>
        <taxon>Eutheria</taxon>
        <taxon>Laurasiatheria</taxon>
        <taxon>Artiodactyla</taxon>
        <taxon>Suina</taxon>
        <taxon>Suidae</taxon>
        <taxon>Sus</taxon>
    </lineage>
</organism>
<evidence type="ECO:0000250" key="1"/>
<evidence type="ECO:0000250" key="2">
    <source>
        <dbReference type="UniProtKB" id="P07108"/>
    </source>
</evidence>
<evidence type="ECO:0000250" key="3">
    <source>
        <dbReference type="UniProtKB" id="P31786"/>
    </source>
</evidence>
<evidence type="ECO:0000255" key="4">
    <source>
        <dbReference type="PROSITE-ProRule" id="PRU00573"/>
    </source>
</evidence>
<evidence type="ECO:0000269" key="5">
    <source>
    </source>
</evidence>
<evidence type="ECO:0000305" key="6"/>
<proteinExistence type="evidence at protein level"/>